<reference key="1">
    <citation type="submission" date="2008-02" db="EMBL/GenBank/DDBJ databases">
        <title>Complete sequence of Yersinia pseudotuberculosis YPIII.</title>
        <authorList>
            <consortium name="US DOE Joint Genome Institute"/>
            <person name="Copeland A."/>
            <person name="Lucas S."/>
            <person name="Lapidus A."/>
            <person name="Glavina del Rio T."/>
            <person name="Dalin E."/>
            <person name="Tice H."/>
            <person name="Bruce D."/>
            <person name="Goodwin L."/>
            <person name="Pitluck S."/>
            <person name="Munk A.C."/>
            <person name="Brettin T."/>
            <person name="Detter J.C."/>
            <person name="Han C."/>
            <person name="Tapia R."/>
            <person name="Schmutz J."/>
            <person name="Larimer F."/>
            <person name="Land M."/>
            <person name="Hauser L."/>
            <person name="Challacombe J.F."/>
            <person name="Green L."/>
            <person name="Lindler L.E."/>
            <person name="Nikolich M.P."/>
            <person name="Richardson P."/>
        </authorList>
    </citation>
    <scope>NUCLEOTIDE SEQUENCE [LARGE SCALE GENOMIC DNA]</scope>
    <source>
        <strain>YPIII</strain>
    </source>
</reference>
<feature type="chain" id="PRO_1000135754" description="UPF0213 protein YPK_3712">
    <location>
        <begin position="1"/>
        <end position="95"/>
    </location>
</feature>
<feature type="domain" description="GIY-YIG" evidence="1">
    <location>
        <begin position="4"/>
        <end position="79"/>
    </location>
</feature>
<name>Y3712_YERPY</name>
<evidence type="ECO:0000255" key="1">
    <source>
        <dbReference type="HAMAP-Rule" id="MF_01029"/>
    </source>
</evidence>
<accession>B1JLW2</accession>
<comment type="similarity">
    <text evidence="1">Belongs to the UPF0213 family.</text>
</comment>
<protein>
    <recommendedName>
        <fullName evidence="1">UPF0213 protein YPK_3712</fullName>
    </recommendedName>
</protein>
<dbReference type="EMBL" id="CP000950">
    <property type="protein sequence ID" value="ACA69979.1"/>
    <property type="molecule type" value="Genomic_DNA"/>
</dbReference>
<dbReference type="RefSeq" id="WP_011191637.1">
    <property type="nucleotide sequence ID" value="NZ_CP009792.1"/>
</dbReference>
<dbReference type="SMR" id="B1JLW2"/>
<dbReference type="KEGG" id="ypy:YPK_3712"/>
<dbReference type="PATRIC" id="fig|502800.11.peg.58"/>
<dbReference type="CDD" id="cd10456">
    <property type="entry name" value="GIY-YIG_UPF0213"/>
    <property type="match status" value="1"/>
</dbReference>
<dbReference type="Gene3D" id="3.40.1440.10">
    <property type="entry name" value="GIY-YIG endonuclease"/>
    <property type="match status" value="1"/>
</dbReference>
<dbReference type="HAMAP" id="MF_01029">
    <property type="entry name" value="UPF0213"/>
    <property type="match status" value="1"/>
</dbReference>
<dbReference type="InterPro" id="IPR000305">
    <property type="entry name" value="GIY-YIG_endonuc"/>
</dbReference>
<dbReference type="InterPro" id="IPR035901">
    <property type="entry name" value="GIY-YIG_endonuc_sf"/>
</dbReference>
<dbReference type="InterPro" id="IPR050190">
    <property type="entry name" value="UPF0213_domain"/>
</dbReference>
<dbReference type="InterPro" id="IPR022992">
    <property type="entry name" value="UPF0213_GIY-YIG_endonuc"/>
</dbReference>
<dbReference type="PANTHER" id="PTHR34477">
    <property type="entry name" value="UPF0213 PROTEIN YHBQ"/>
    <property type="match status" value="1"/>
</dbReference>
<dbReference type="PANTHER" id="PTHR34477:SF1">
    <property type="entry name" value="UPF0213 PROTEIN YHBQ"/>
    <property type="match status" value="1"/>
</dbReference>
<dbReference type="Pfam" id="PF01541">
    <property type="entry name" value="GIY-YIG"/>
    <property type="match status" value="1"/>
</dbReference>
<dbReference type="SUPFAM" id="SSF82771">
    <property type="entry name" value="GIY-YIG endonuclease"/>
    <property type="match status" value="1"/>
</dbReference>
<dbReference type="PROSITE" id="PS50164">
    <property type="entry name" value="GIY_YIG"/>
    <property type="match status" value="1"/>
</dbReference>
<sequence>MSDSLWHLYLLRTASGMLYTGITTDVARRLAQHQAGKGAKALRGKGELTLVFHCEAGDRSTALKLEYRVKQLSKQQKEKLVIDQPRLLTTLFLAS</sequence>
<organism>
    <name type="scientific">Yersinia pseudotuberculosis serotype O:3 (strain YPIII)</name>
    <dbReference type="NCBI Taxonomy" id="502800"/>
    <lineage>
        <taxon>Bacteria</taxon>
        <taxon>Pseudomonadati</taxon>
        <taxon>Pseudomonadota</taxon>
        <taxon>Gammaproteobacteria</taxon>
        <taxon>Enterobacterales</taxon>
        <taxon>Yersiniaceae</taxon>
        <taxon>Yersinia</taxon>
    </lineage>
</organism>
<gene>
    <name type="ordered locus">YPK_3712</name>
</gene>
<proteinExistence type="inferred from homology"/>